<proteinExistence type="inferred from homology"/>
<accession>Q49KX1</accession>
<geneLocation type="chloroplast"/>
<keyword id="KW-0150">Chloroplast</keyword>
<keyword id="KW-0472">Membrane</keyword>
<keyword id="KW-0602">Photosynthesis</keyword>
<keyword id="KW-0604">Photosystem II</keyword>
<keyword id="KW-0934">Plastid</keyword>
<keyword id="KW-0793">Thylakoid</keyword>
<keyword id="KW-0812">Transmembrane</keyword>
<keyword id="KW-1133">Transmembrane helix</keyword>
<dbReference type="EMBL" id="AY780259">
    <property type="protein sequence ID" value="AAX21054.1"/>
    <property type="molecule type" value="Genomic_DNA"/>
</dbReference>
<dbReference type="RefSeq" id="YP_636326.1">
    <property type="nucleotide sequence ID" value="NC_008115.1"/>
</dbReference>
<dbReference type="SMR" id="Q49KX1"/>
<dbReference type="GeneID" id="4108410"/>
<dbReference type="GO" id="GO:0009535">
    <property type="term" value="C:chloroplast thylakoid membrane"/>
    <property type="evidence" value="ECO:0007669"/>
    <property type="project" value="UniProtKB-SubCell"/>
</dbReference>
<dbReference type="GO" id="GO:0009539">
    <property type="term" value="C:photosystem II reaction center"/>
    <property type="evidence" value="ECO:0007669"/>
    <property type="project" value="InterPro"/>
</dbReference>
<dbReference type="GO" id="GO:0015979">
    <property type="term" value="P:photosynthesis"/>
    <property type="evidence" value="ECO:0007669"/>
    <property type="project" value="UniProtKB-UniRule"/>
</dbReference>
<dbReference type="HAMAP" id="MF_00808">
    <property type="entry name" value="PSII_PsbT"/>
    <property type="match status" value="1"/>
</dbReference>
<dbReference type="InterPro" id="IPR001743">
    <property type="entry name" value="PSII_PsbT"/>
</dbReference>
<dbReference type="InterPro" id="IPR037268">
    <property type="entry name" value="PSII_PsbT_sf"/>
</dbReference>
<dbReference type="PANTHER" id="PTHR36411">
    <property type="match status" value="1"/>
</dbReference>
<dbReference type="PANTHER" id="PTHR36411:SF2">
    <property type="entry name" value="PHOTOSYSTEM II REACTION CENTER PROTEIN T"/>
    <property type="match status" value="1"/>
</dbReference>
<dbReference type="Pfam" id="PF01405">
    <property type="entry name" value="PsbT"/>
    <property type="match status" value="1"/>
</dbReference>
<dbReference type="SUPFAM" id="SSF161029">
    <property type="entry name" value="Photosystem II reaction center protein T, PsbT"/>
    <property type="match status" value="1"/>
</dbReference>
<organism>
    <name type="scientific">Eucalyptus globulus subsp. globulus</name>
    <name type="common">Tasmanian blue gum</name>
    <dbReference type="NCBI Taxonomy" id="71271"/>
    <lineage>
        <taxon>Eukaryota</taxon>
        <taxon>Viridiplantae</taxon>
        <taxon>Streptophyta</taxon>
        <taxon>Embryophyta</taxon>
        <taxon>Tracheophyta</taxon>
        <taxon>Spermatophyta</taxon>
        <taxon>Magnoliopsida</taxon>
        <taxon>eudicotyledons</taxon>
        <taxon>Gunneridae</taxon>
        <taxon>Pentapetalae</taxon>
        <taxon>rosids</taxon>
        <taxon>malvids</taxon>
        <taxon>Myrtales</taxon>
        <taxon>Myrtaceae</taxon>
        <taxon>Myrtoideae</taxon>
        <taxon>Eucalypteae</taxon>
        <taxon>Eucalyptus</taxon>
    </lineage>
</organism>
<sequence length="35" mass="4045">MEALVYTFLLVSTLGIIFFAIFFREPPKVPTKKVK</sequence>
<evidence type="ECO:0000255" key="1">
    <source>
        <dbReference type="HAMAP-Rule" id="MF_00808"/>
    </source>
</evidence>
<reference key="1">
    <citation type="journal article" date="2005" name="DNA Res.">
        <title>Complete nucleotide sequence of the chloroplast genome from the Tasmanian blue gum, Eucalyptus globulus (Myrtaceae).</title>
        <authorList>
            <person name="Steane D.A."/>
        </authorList>
    </citation>
    <scope>NUCLEOTIDE SEQUENCE [LARGE SCALE GENOMIC DNA]</scope>
</reference>
<comment type="function">
    <text evidence="1">Found at the monomer-monomer interface of the photosystem II (PS II) dimer, plays a role in assembly and dimerization of PSII. PSII is a light-driven water plastoquinone oxidoreductase, using light energy to abstract electrons from H(2)O, generating a proton gradient subsequently used for ATP formation.</text>
</comment>
<comment type="subunit">
    <text evidence="1">PSII is composed of 1 copy each of membrane proteins PsbA, PsbB, PsbC, PsbD, PsbE, PsbF, PsbH, PsbI, PsbJ, PsbK, PsbL, PsbM, PsbT, PsbY, PsbZ, Psb30/Ycf12, at least 3 peripheral proteins of the oxygen-evolving complex and a large number of cofactors. It forms dimeric complexes.</text>
</comment>
<comment type="subcellular location">
    <subcellularLocation>
        <location evidence="1">Plastid</location>
        <location evidence="1">Chloroplast thylakoid membrane</location>
        <topology evidence="1">Single-pass membrane protein</topology>
    </subcellularLocation>
</comment>
<comment type="similarity">
    <text evidence="1">Belongs to the PsbT family.</text>
</comment>
<name>PSBT_EUCGG</name>
<feature type="chain" id="PRO_0000276294" description="Photosystem II reaction center protein T">
    <location>
        <begin position="1"/>
        <end position="35"/>
    </location>
</feature>
<feature type="transmembrane region" description="Helical" evidence="1">
    <location>
        <begin position="3"/>
        <end position="23"/>
    </location>
</feature>
<gene>
    <name evidence="1" type="primary">psbT</name>
</gene>
<protein>
    <recommendedName>
        <fullName evidence="1">Photosystem II reaction center protein T</fullName>
        <shortName evidence="1">PSII-T</shortName>
    </recommendedName>
</protein>